<organism>
    <name type="scientific">Photobacterium profundum (strain SS9)</name>
    <dbReference type="NCBI Taxonomy" id="298386"/>
    <lineage>
        <taxon>Bacteria</taxon>
        <taxon>Pseudomonadati</taxon>
        <taxon>Pseudomonadota</taxon>
        <taxon>Gammaproteobacteria</taxon>
        <taxon>Vibrionales</taxon>
        <taxon>Vibrionaceae</taxon>
        <taxon>Photobacterium</taxon>
    </lineage>
</organism>
<keyword id="KW-0963">Cytoplasm</keyword>
<keyword id="KW-1185">Reference proteome</keyword>
<keyword id="KW-0694">RNA-binding</keyword>
<reference key="1">
    <citation type="journal article" date="2005" name="Science">
        <title>Life at depth: Photobacterium profundum genome sequence and expression analysis.</title>
        <authorList>
            <person name="Vezzi A."/>
            <person name="Campanaro S."/>
            <person name="D'Angelo M."/>
            <person name="Simonato F."/>
            <person name="Vitulo N."/>
            <person name="Lauro F.M."/>
            <person name="Cestaro A."/>
            <person name="Malacrida G."/>
            <person name="Simionati B."/>
            <person name="Cannata N."/>
            <person name="Romualdi C."/>
            <person name="Bartlett D.H."/>
            <person name="Valle G."/>
        </authorList>
    </citation>
    <scope>NUCLEOTIDE SEQUENCE [LARGE SCALE GENOMIC DNA]</scope>
    <source>
        <strain>ATCC BAA-1253 / SS9</strain>
    </source>
</reference>
<name>SSRP_PHOPR</name>
<protein>
    <recommendedName>
        <fullName evidence="1">SsrA-binding protein</fullName>
    </recommendedName>
    <alternativeName>
        <fullName evidence="1">Small protein B</fullName>
    </alternativeName>
</protein>
<comment type="function">
    <text evidence="1">Required for rescue of stalled ribosomes mediated by trans-translation. Binds to transfer-messenger RNA (tmRNA), required for stable association of tmRNA with ribosomes. tmRNA and SmpB together mimic tRNA shape, replacing the anticodon stem-loop with SmpB. tmRNA is encoded by the ssrA gene; the 2 termini fold to resemble tRNA(Ala) and it encodes a 'tag peptide', a short internal open reading frame. During trans-translation Ala-aminoacylated tmRNA acts like a tRNA, entering the A-site of stalled ribosomes, displacing the stalled mRNA. The ribosome then switches to translate the ORF on the tmRNA; the nascent peptide is terminated with the 'tag peptide' encoded by the tmRNA and targeted for degradation. The ribosome is freed to recommence translation, which seems to be the essential function of trans-translation.</text>
</comment>
<comment type="subcellular location">
    <subcellularLocation>
        <location evidence="1">Cytoplasm</location>
    </subcellularLocation>
    <text evidence="1">The tmRNA-SmpB complex associates with stalled 70S ribosomes.</text>
</comment>
<comment type="similarity">
    <text evidence="1">Belongs to the SmpB family.</text>
</comment>
<proteinExistence type="inferred from homology"/>
<dbReference type="EMBL" id="CR378665">
    <property type="protein sequence ID" value="CAG19111.1"/>
    <property type="molecule type" value="Genomic_DNA"/>
</dbReference>
<dbReference type="RefSeq" id="WP_006230748.1">
    <property type="nucleotide sequence ID" value="NC_006370.1"/>
</dbReference>
<dbReference type="SMR" id="Q6LUB4"/>
<dbReference type="STRING" id="298386.PBPRA0690"/>
<dbReference type="KEGG" id="ppr:PBPRA0690"/>
<dbReference type="eggNOG" id="COG0691">
    <property type="taxonomic scope" value="Bacteria"/>
</dbReference>
<dbReference type="HOGENOM" id="CLU_108953_3_0_6"/>
<dbReference type="Proteomes" id="UP000000593">
    <property type="component" value="Chromosome 1"/>
</dbReference>
<dbReference type="GO" id="GO:0005829">
    <property type="term" value="C:cytosol"/>
    <property type="evidence" value="ECO:0007669"/>
    <property type="project" value="TreeGrafter"/>
</dbReference>
<dbReference type="GO" id="GO:0003723">
    <property type="term" value="F:RNA binding"/>
    <property type="evidence" value="ECO:0007669"/>
    <property type="project" value="UniProtKB-UniRule"/>
</dbReference>
<dbReference type="GO" id="GO:0070929">
    <property type="term" value="P:trans-translation"/>
    <property type="evidence" value="ECO:0007669"/>
    <property type="project" value="UniProtKB-UniRule"/>
</dbReference>
<dbReference type="CDD" id="cd09294">
    <property type="entry name" value="SmpB"/>
    <property type="match status" value="1"/>
</dbReference>
<dbReference type="Gene3D" id="2.40.280.10">
    <property type="match status" value="1"/>
</dbReference>
<dbReference type="HAMAP" id="MF_00023">
    <property type="entry name" value="SmpB"/>
    <property type="match status" value="1"/>
</dbReference>
<dbReference type="InterPro" id="IPR023620">
    <property type="entry name" value="SmpB"/>
</dbReference>
<dbReference type="InterPro" id="IPR000037">
    <property type="entry name" value="SsrA-bd_prot"/>
</dbReference>
<dbReference type="InterPro" id="IPR020081">
    <property type="entry name" value="SsrA-bd_prot_CS"/>
</dbReference>
<dbReference type="NCBIfam" id="NF003843">
    <property type="entry name" value="PRK05422.1"/>
    <property type="match status" value="1"/>
</dbReference>
<dbReference type="NCBIfam" id="TIGR00086">
    <property type="entry name" value="smpB"/>
    <property type="match status" value="1"/>
</dbReference>
<dbReference type="PANTHER" id="PTHR30308:SF2">
    <property type="entry name" value="SSRA-BINDING PROTEIN"/>
    <property type="match status" value="1"/>
</dbReference>
<dbReference type="PANTHER" id="PTHR30308">
    <property type="entry name" value="TMRNA-BINDING COMPONENT OF TRANS-TRANSLATION TAGGING COMPLEX"/>
    <property type="match status" value="1"/>
</dbReference>
<dbReference type="Pfam" id="PF01668">
    <property type="entry name" value="SmpB"/>
    <property type="match status" value="1"/>
</dbReference>
<dbReference type="SUPFAM" id="SSF74982">
    <property type="entry name" value="Small protein B (SmpB)"/>
    <property type="match status" value="1"/>
</dbReference>
<dbReference type="PROSITE" id="PS01317">
    <property type="entry name" value="SSRP"/>
    <property type="match status" value="1"/>
</dbReference>
<gene>
    <name evidence="1" type="primary">smpB</name>
    <name type="ordered locus">PBPRA0690</name>
</gene>
<evidence type="ECO:0000255" key="1">
    <source>
        <dbReference type="HAMAP-Rule" id="MF_00023"/>
    </source>
</evidence>
<evidence type="ECO:0000256" key="2">
    <source>
        <dbReference type="SAM" id="MobiDB-lite"/>
    </source>
</evidence>
<sequence length="158" mass="17928">MAKKPNKSDNTIAKNRTARHEFAIQDDYEAGLQLQGWEVKAIRNGKVNIAESYVFLRDGEAFISGVTITPLNAASTHVVADPTRTRKLLLNRKEIDKLLGAVNREGQTIVALSMYWKASWVKLKIGTARGKKLHDKRADSKSRDWARDKQRIMKHSTR</sequence>
<accession>Q6LUB4</accession>
<feature type="chain" id="PRO_0000103002" description="SsrA-binding protein">
    <location>
        <begin position="1"/>
        <end position="158"/>
    </location>
</feature>
<feature type="region of interest" description="Disordered" evidence="2">
    <location>
        <begin position="136"/>
        <end position="158"/>
    </location>
</feature>
<feature type="compositionally biased region" description="Basic and acidic residues" evidence="2">
    <location>
        <begin position="136"/>
        <end position="151"/>
    </location>
</feature>